<evidence type="ECO:0000250" key="1"/>
<evidence type="ECO:0000305" key="2"/>
<gene>
    <name type="primary">hlgA</name>
    <name type="synonym">hlg2</name>
    <name type="ordered locus">MW2342</name>
</gene>
<sequence>MIKNKILTATLAVGLIAPLANPFIEISKAENKIEDIGQGAEIIKRTQDITSKRLAITQNIQFDFVKDKKYNKDALVVKMQGFISSRTTYSDLKKYPYIKRMIWPFQYNISLKTKDSNVDLINYLPKNKIDSADVSQKLGYNIGGNFQSAPSIGGSGSFNYSKTISYNQKNYVTEVESQNSKGVKWGVKANSFVTPNGQVSAYDQYLFAQDPTGPAARDYFVPDNQLPPLIQSGFNPSFITTLSHERGKGDKSEFEITYGRNMDATYAYVTRHRLAVDRKHDAFKNRNVTVKYEVNWKTHEVKIKSITPK</sequence>
<accession>P0A073</accession>
<accession>P31714</accession>
<accession>Q07225</accession>
<accession>Q53689</accession>
<accession>Q53690</accession>
<dbReference type="EMBL" id="BA000033">
    <property type="protein sequence ID" value="BAB96207.1"/>
    <property type="molecule type" value="Genomic_DNA"/>
</dbReference>
<dbReference type="RefSeq" id="WP_000594519.1">
    <property type="nucleotide sequence ID" value="NC_003923.1"/>
</dbReference>
<dbReference type="SMR" id="P0A073"/>
<dbReference type="KEGG" id="sam:MW2342"/>
<dbReference type="HOGENOM" id="CLU_075311_0_0_9"/>
<dbReference type="GO" id="GO:0005576">
    <property type="term" value="C:extracellular region"/>
    <property type="evidence" value="ECO:0007669"/>
    <property type="project" value="UniProtKB-SubCell"/>
</dbReference>
<dbReference type="GO" id="GO:0090729">
    <property type="term" value="F:toxin activity"/>
    <property type="evidence" value="ECO:0007669"/>
    <property type="project" value="UniProtKB-KW"/>
</dbReference>
<dbReference type="GO" id="GO:0051715">
    <property type="term" value="P:cytolysis in another organism"/>
    <property type="evidence" value="ECO:0007669"/>
    <property type="project" value="InterPro"/>
</dbReference>
<dbReference type="Gene3D" id="2.70.240.10">
    <property type="entry name" value="Leukocidin/porin MspA"/>
    <property type="match status" value="1"/>
</dbReference>
<dbReference type="InterPro" id="IPR003963">
    <property type="entry name" value="Bi-component_toxin_staph"/>
</dbReference>
<dbReference type="InterPro" id="IPR016183">
    <property type="entry name" value="Leukocidin/Hemolysin_toxin"/>
</dbReference>
<dbReference type="InterPro" id="IPR036435">
    <property type="entry name" value="Leukocidin/porin_MspA_sf"/>
</dbReference>
<dbReference type="NCBIfam" id="TIGR01002">
    <property type="entry name" value="hlyII"/>
    <property type="match status" value="1"/>
</dbReference>
<dbReference type="Pfam" id="PF07968">
    <property type="entry name" value="Leukocidin"/>
    <property type="match status" value="1"/>
</dbReference>
<dbReference type="PRINTS" id="PR01468">
    <property type="entry name" value="BICOMPNTOXIN"/>
</dbReference>
<dbReference type="SUPFAM" id="SSF56959">
    <property type="entry name" value="Leukocidin-like"/>
    <property type="match status" value="1"/>
</dbReference>
<name>HLGA_STAAW</name>
<keyword id="KW-0204">Cytolysis</keyword>
<keyword id="KW-0354">Hemolysis</keyword>
<keyword id="KW-0964">Secreted</keyword>
<keyword id="KW-0732">Signal</keyword>
<keyword id="KW-0800">Toxin</keyword>
<keyword id="KW-0843">Virulence</keyword>
<proteinExistence type="inferred from homology"/>
<reference key="1">
    <citation type="journal article" date="2002" name="Lancet">
        <title>Genome and virulence determinants of high virulence community-acquired MRSA.</title>
        <authorList>
            <person name="Baba T."/>
            <person name="Takeuchi F."/>
            <person name="Kuroda M."/>
            <person name="Yuzawa H."/>
            <person name="Aoki K."/>
            <person name="Oguchi A."/>
            <person name="Nagai Y."/>
            <person name="Iwama N."/>
            <person name="Asano K."/>
            <person name="Naimi T."/>
            <person name="Kuroda H."/>
            <person name="Cui L."/>
            <person name="Yamamoto K."/>
            <person name="Hiramatsu K."/>
        </authorList>
    </citation>
    <scope>NUCLEOTIDE SEQUENCE [LARGE SCALE GENOMIC DNA]</scope>
    <source>
        <strain>MW2</strain>
    </source>
</reference>
<comment type="function">
    <text evidence="1">Toxin that seems to act by forming pores in the membrane of the cell. Has a hemolytic and a leucotoxic activity (By similarity).</text>
</comment>
<comment type="subunit">
    <text evidence="1">Toxicity requires sequential binding and synergistic association of a class S and a class F component which form heterooligomeric complexes. HlgA (class S) associates with HlgB (class F) thus forming an AB toxin in strains producing both gamma-hemolysins and leukocidins. HlgA and LukF-PV can also form a complex (By similarity).</text>
</comment>
<comment type="subcellular location">
    <subcellularLocation>
        <location evidence="1">Secreted</location>
    </subcellularLocation>
</comment>
<comment type="similarity">
    <text evidence="2">Belongs to the aerolysin family.</text>
</comment>
<protein>
    <recommendedName>
        <fullName>Gamma-hemolysin component A</fullName>
    </recommendedName>
    <alternativeName>
        <fullName>H-gamma-2</fullName>
    </alternativeName>
    <alternativeName>
        <fullName>H-gamma-II</fullName>
    </alternativeName>
</protein>
<organism>
    <name type="scientific">Staphylococcus aureus (strain MW2)</name>
    <dbReference type="NCBI Taxonomy" id="196620"/>
    <lineage>
        <taxon>Bacteria</taxon>
        <taxon>Bacillati</taxon>
        <taxon>Bacillota</taxon>
        <taxon>Bacilli</taxon>
        <taxon>Bacillales</taxon>
        <taxon>Staphylococcaceae</taxon>
        <taxon>Staphylococcus</taxon>
    </lineage>
</organism>
<feature type="signal peptide" evidence="1">
    <location>
        <begin position="1"/>
        <end position="29"/>
    </location>
</feature>
<feature type="chain" id="PRO_0000018421" description="Gamma-hemolysin component A">
    <location>
        <begin position="30"/>
        <end position="309"/>
    </location>
</feature>